<organism>
    <name type="scientific">Botryococcus braunii</name>
    <name type="common">Green alga</name>
    <dbReference type="NCBI Taxonomy" id="38881"/>
    <lineage>
        <taxon>Eukaryota</taxon>
        <taxon>Viridiplantae</taxon>
        <taxon>Chlorophyta</taxon>
        <taxon>core chlorophytes</taxon>
        <taxon>Trebouxiophyceae</taxon>
        <taxon>Trebouxiophyceae incertae sedis</taxon>
        <taxon>Elliptochloris clade</taxon>
        <taxon>Botryococcus</taxon>
    </lineage>
</organism>
<proteinExistence type="evidence at protein level"/>
<sequence length="462" mass="51965">MGKLQEVLKHPDELVPLMQMLVSDYYTKIVPRDPGLGFCYRMLNKVSRSFAIVIQQLPELLRDPICVFYLVLRALDTVEDDMALPNDIKLPLLRAFHKKIYDRKWSMKCGYGPYVQLMEEYPMVTGVFLKLDPGPREVITEICRKMGAGMAEFIPKEVLTVKDYDQYCHYAAGLVGEGLSKLAVGSGLENPVLLQKEDLSNHMGLFLQKTNIVRDYLEDINEEPAPRMFWPKEIWGKYTKDLADFKDPANEKGAVQCLNHMVTDALRHGEHALKYMALLRDPQYFNFCAIPQVMAFGTLSLCYNNPQVFKGVVKLRKGESAKLMTTVKSMPALYRTFLRMADDMVARCKGEARQDPNVATTLKRLQAIQAVCKTGLRSSIKSRKKQAATPLSDDFISKLVLVLGLGYCVYAFNLLPLLWKSALIPGPPPPALTSSLGLPHQIIAVFCVLTAGYQVFLRGGLA</sequence>
<evidence type="ECO:0000250" key="1">
    <source>
        <dbReference type="UniProtKB" id="P37268"/>
    </source>
</evidence>
<evidence type="ECO:0000255" key="2"/>
<evidence type="ECO:0000269" key="3">
    <source>
    </source>
</evidence>
<evidence type="ECO:0000303" key="4">
    <source>
    </source>
</evidence>
<evidence type="ECO:0000305" key="5"/>
<comment type="function">
    <text evidence="3">Converts farnesyl diphosphate (FPP) into squalene, a precursor for sterol biosynthesis in eukaryotes.</text>
</comment>
<comment type="catalytic activity">
    <reaction evidence="3">
        <text>2 (2E,6E)-farnesyl diphosphate + NADH + H(+) = squalene + 2 diphosphate + NAD(+)</text>
        <dbReference type="Rhea" id="RHEA:32299"/>
        <dbReference type="ChEBI" id="CHEBI:15378"/>
        <dbReference type="ChEBI" id="CHEBI:15440"/>
        <dbReference type="ChEBI" id="CHEBI:33019"/>
        <dbReference type="ChEBI" id="CHEBI:57540"/>
        <dbReference type="ChEBI" id="CHEBI:57945"/>
        <dbReference type="ChEBI" id="CHEBI:175763"/>
        <dbReference type="EC" id="2.5.1.21"/>
    </reaction>
</comment>
<comment type="catalytic activity">
    <reaction evidence="3">
        <text>2 (2E,6E)-farnesyl diphosphate + NADPH + H(+) = squalene + 2 diphosphate + NADP(+)</text>
        <dbReference type="Rhea" id="RHEA:32295"/>
        <dbReference type="ChEBI" id="CHEBI:15378"/>
        <dbReference type="ChEBI" id="CHEBI:15440"/>
        <dbReference type="ChEBI" id="CHEBI:33019"/>
        <dbReference type="ChEBI" id="CHEBI:57783"/>
        <dbReference type="ChEBI" id="CHEBI:58349"/>
        <dbReference type="ChEBI" id="CHEBI:175763"/>
        <dbReference type="EC" id="2.5.1.21"/>
    </reaction>
</comment>
<comment type="cofactor">
    <cofactor evidence="1">
        <name>Mg(2+)</name>
        <dbReference type="ChEBI" id="CHEBI:18420"/>
    </cofactor>
</comment>
<comment type="subcellular location">
    <subcellularLocation>
        <location evidence="2">Membrane</location>
        <topology evidence="2">Multi-pass membrane protein</topology>
    </subcellularLocation>
</comment>
<comment type="similarity">
    <text evidence="5">Belongs to the phytoene/squalene synthase family.</text>
</comment>
<dbReference type="EC" id="2.5.1.21" evidence="3"/>
<dbReference type="EMBL" id="KT388100">
    <property type="protein sequence ID" value="AMV49168.1"/>
    <property type="molecule type" value="mRNA"/>
</dbReference>
<dbReference type="SMR" id="A0A144YEA5"/>
<dbReference type="BRENDA" id="2.5.1.148">
    <property type="organism ID" value="915"/>
</dbReference>
<dbReference type="GO" id="GO:0005789">
    <property type="term" value="C:endoplasmic reticulum membrane"/>
    <property type="evidence" value="ECO:0007669"/>
    <property type="project" value="TreeGrafter"/>
</dbReference>
<dbReference type="GO" id="GO:0046872">
    <property type="term" value="F:metal ion binding"/>
    <property type="evidence" value="ECO:0007669"/>
    <property type="project" value="UniProtKB-KW"/>
</dbReference>
<dbReference type="GO" id="GO:0051996">
    <property type="term" value="F:squalene synthase [NAD(P)H] activity"/>
    <property type="evidence" value="ECO:0000314"/>
    <property type="project" value="UniProtKB"/>
</dbReference>
<dbReference type="GO" id="GO:0045338">
    <property type="term" value="P:farnesyl diphosphate metabolic process"/>
    <property type="evidence" value="ECO:0007669"/>
    <property type="project" value="InterPro"/>
</dbReference>
<dbReference type="GO" id="GO:0016126">
    <property type="term" value="P:sterol biosynthetic process"/>
    <property type="evidence" value="ECO:0000314"/>
    <property type="project" value="UniProtKB"/>
</dbReference>
<dbReference type="CDD" id="cd00683">
    <property type="entry name" value="Trans_IPPS_HH"/>
    <property type="match status" value="1"/>
</dbReference>
<dbReference type="FunFam" id="1.10.600.10:FF:000023">
    <property type="entry name" value="Squalene synthase"/>
    <property type="match status" value="1"/>
</dbReference>
<dbReference type="Gene3D" id="1.10.600.10">
    <property type="entry name" value="Farnesyl Diphosphate Synthase"/>
    <property type="match status" value="1"/>
</dbReference>
<dbReference type="InterPro" id="IPR008949">
    <property type="entry name" value="Isoprenoid_synthase_dom_sf"/>
</dbReference>
<dbReference type="InterPro" id="IPR002060">
    <property type="entry name" value="Squ/phyt_synthse"/>
</dbReference>
<dbReference type="InterPro" id="IPR006449">
    <property type="entry name" value="Squal_synth-like"/>
</dbReference>
<dbReference type="InterPro" id="IPR019845">
    <property type="entry name" value="Squalene/phytoene_synthase_CS"/>
</dbReference>
<dbReference type="InterPro" id="IPR044844">
    <property type="entry name" value="Trans_IPPS_euk-type"/>
</dbReference>
<dbReference type="InterPro" id="IPR033904">
    <property type="entry name" value="Trans_IPPS_HH"/>
</dbReference>
<dbReference type="NCBIfam" id="TIGR01559">
    <property type="entry name" value="squal_synth"/>
    <property type="match status" value="1"/>
</dbReference>
<dbReference type="PANTHER" id="PTHR11626">
    <property type="entry name" value="FARNESYL-DIPHOSPHATE FARNESYLTRANSFERASE"/>
    <property type="match status" value="1"/>
</dbReference>
<dbReference type="PANTHER" id="PTHR11626:SF2">
    <property type="entry name" value="SQUALENE SYNTHASE"/>
    <property type="match status" value="1"/>
</dbReference>
<dbReference type="Pfam" id="PF00494">
    <property type="entry name" value="SQS_PSY"/>
    <property type="match status" value="1"/>
</dbReference>
<dbReference type="SFLD" id="SFLDS00005">
    <property type="entry name" value="Isoprenoid_Synthase_Type_I"/>
    <property type="match status" value="1"/>
</dbReference>
<dbReference type="SFLD" id="SFLDG01018">
    <property type="entry name" value="Squalene/Phytoene_Synthase_Lik"/>
    <property type="match status" value="1"/>
</dbReference>
<dbReference type="SUPFAM" id="SSF48576">
    <property type="entry name" value="Terpenoid synthases"/>
    <property type="match status" value="1"/>
</dbReference>
<dbReference type="PROSITE" id="PS01045">
    <property type="entry name" value="SQUALEN_PHYTOEN_SYN_2"/>
    <property type="match status" value="1"/>
</dbReference>
<gene>
    <name evidence="4" type="primary">LSS</name>
</gene>
<reference key="1">
    <citation type="journal article" date="2016" name="Nat. Commun.">
        <title>A squalene synthase-like enzyme initiates production of tetraterpenoid hydrocarbons in Botryococcus braunii Race L.</title>
        <authorList>
            <person name="Thapa H.R."/>
            <person name="Naik M.T."/>
            <person name="Okada S."/>
            <person name="Takada K."/>
            <person name="Molnar I."/>
            <person name="Xu Y."/>
            <person name="Devarenne T.P."/>
        </authorList>
    </citation>
    <scope>NUCLEOTIDE SEQUENCE [MRNA]</scope>
    <scope>FUNCTION</scope>
    <scope>CATALYTIC ACTIVITY</scope>
    <source>
        <strain>Race L</strain>
    </source>
</reference>
<name>LSS_BOTBR</name>
<keyword id="KW-0460">Magnesium</keyword>
<keyword id="KW-0472">Membrane</keyword>
<keyword id="KW-0479">Metal-binding</keyword>
<keyword id="KW-0520">NAD</keyword>
<keyword id="KW-0521">NADP</keyword>
<keyword id="KW-0808">Transferase</keyword>
<keyword id="KW-0812">Transmembrane</keyword>
<keyword id="KW-1133">Transmembrane helix</keyword>
<accession>A0A144YEA5</accession>
<feature type="chain" id="PRO_0000446505" description="Squalene synthase LSS">
    <location>
        <begin position="1"/>
        <end position="462"/>
    </location>
</feature>
<feature type="transmembrane region" description="Helical" evidence="2">
    <location>
        <begin position="399"/>
        <end position="419"/>
    </location>
</feature>
<feature type="transmembrane region" description="Helical" evidence="2">
    <location>
        <begin position="436"/>
        <end position="456"/>
    </location>
</feature>
<feature type="binding site" evidence="1">
    <location>
        <position position="48"/>
    </location>
    <ligand>
        <name>NADP(+)</name>
        <dbReference type="ChEBI" id="CHEBI:58349"/>
    </ligand>
</feature>
<feature type="binding site" evidence="1">
    <location>
        <position position="73"/>
    </location>
    <ligand>
        <name>NADP(+)</name>
        <dbReference type="ChEBI" id="CHEBI:58349"/>
    </ligand>
</feature>
<feature type="binding site" evidence="1">
    <location>
        <position position="76"/>
    </location>
    <ligand>
        <name>Mg(2+)</name>
        <dbReference type="ChEBI" id="CHEBI:18420"/>
    </ligand>
</feature>
<feature type="binding site" evidence="1">
    <location>
        <position position="79"/>
    </location>
    <ligand>
        <name>Mg(2+)</name>
        <dbReference type="ChEBI" id="CHEBI:18420"/>
    </ligand>
</feature>
<feature type="binding site" evidence="1">
    <location>
        <position position="80"/>
    </location>
    <ligand>
        <name>Mg(2+)</name>
        <dbReference type="ChEBI" id="CHEBI:18420"/>
    </ligand>
</feature>
<feature type="binding site" evidence="1">
    <location>
        <position position="214"/>
    </location>
    <ligand>
        <name>NADP(+)</name>
        <dbReference type="ChEBI" id="CHEBI:58349"/>
    </ligand>
</feature>
<feature type="binding site" evidence="1">
    <location>
        <position position="314"/>
    </location>
    <ligand>
        <name>NADP(+)</name>
        <dbReference type="ChEBI" id="CHEBI:58349"/>
    </ligand>
</feature>
<feature type="binding site" evidence="1">
    <location>
        <position position="316"/>
    </location>
    <ligand>
        <name>NADP(+)</name>
        <dbReference type="ChEBI" id="CHEBI:58349"/>
    </ligand>
</feature>
<protein>
    <recommendedName>
        <fullName evidence="4">Squalene synthase LSS</fullName>
        <ecNumber evidence="3">2.5.1.21</ecNumber>
    </recommendedName>
</protein>